<feature type="chain" id="PRO_0000212788" description="Gamma-D-glutamyl-L-diamino acid endopeptidase 1">
    <location>
        <begin position="1"/>
        <end position="396"/>
    </location>
</feature>
<feature type="domain" description="LysM 1" evidence="2">
    <location>
        <begin position="1"/>
        <end position="45"/>
    </location>
</feature>
<feature type="domain" description="LysM 2" evidence="2">
    <location>
        <begin position="51"/>
        <end position="95"/>
    </location>
</feature>
<feature type="domain" description="Peptidase M14" evidence="3">
    <location>
        <begin position="108"/>
        <end position="394"/>
    </location>
</feature>
<feature type="active site" description="Proton donor" evidence="1">
    <location>
        <position position="347"/>
    </location>
</feature>
<feature type="active site" description="Proton donor/acceptor" evidence="3">
    <location>
        <position position="366"/>
    </location>
</feature>
<feature type="binding site" evidence="3">
    <location>
        <position position="162"/>
    </location>
    <ligand>
        <name>Zn(2+)</name>
        <dbReference type="ChEBI" id="CHEBI:29105"/>
        <note>catalytic</note>
    </ligand>
</feature>
<feature type="binding site" evidence="3">
    <location>
        <position position="165"/>
    </location>
    <ligand>
        <name>Zn(2+)</name>
        <dbReference type="ChEBI" id="CHEBI:29105"/>
        <note>catalytic</note>
    </ligand>
</feature>
<feature type="binding site" evidence="1">
    <location>
        <position position="255"/>
    </location>
    <ligand>
        <name>substrate</name>
    </ligand>
</feature>
<feature type="binding site" evidence="3">
    <location>
        <position position="307"/>
    </location>
    <ligand>
        <name>Zn(2+)</name>
        <dbReference type="ChEBI" id="CHEBI:29105"/>
        <note>catalytic</note>
    </ligand>
</feature>
<name>ENP1_LYSSH</name>
<reference key="1">
    <citation type="journal article" date="1993" name="Biochem. J.">
        <title>Characterization of the sporulation-related gamma-D-glutamyl-(L)meso-diaminopimelic-acid-hydrolysing peptidase I of Bacillus sphaericus NCTC 9602 as a member of the metallo(zinc) carboxypeptidase A family. Modular design of the protein.</title>
        <authorList>
            <person name="Hourdou M.-L."/>
            <person name="Guinand M."/>
            <person name="Vacheron M.J."/>
            <person name="Michel G."/>
            <person name="Denoroy L."/>
            <person name="Duez C.M."/>
            <person name="Englebert S."/>
            <person name="Joris B."/>
            <person name="Weber G."/>
            <person name="Ghuysen J.-M."/>
        </authorList>
    </citation>
    <scope>NUCLEOTIDE SEQUENCE [GENOMIC DNA]</scope>
    <scope>PARTIAL PROTEIN SEQUENCE</scope>
    <source>
        <strain>DSM 396 / NCTC 9602</strain>
    </source>
</reference>
<reference key="2">
    <citation type="journal article" date="1985" name="Eur. J. Biochem.">
        <title>Purification and partial characterization of the extracellular gamma-D-glutamyl-(L)meso-diaminopimelate endopeptidase I, from Bacillus sphaericus NCTC 9602.</title>
        <authorList>
            <person name="Garnier M."/>
            <person name="Vacheron M."/>
            <person name="Guinard J.-M."/>
            <person name="Michel G."/>
        </authorList>
    </citation>
    <scope>CHARACTERIZATION</scope>
    <source>
        <strain>DSM 396 / NCTC 9602</strain>
    </source>
</reference>
<accession>Q03415</accession>
<protein>
    <recommendedName>
        <fullName>Gamma-D-glutamyl-L-diamino acid endopeptidase 1</fullName>
        <ecNumber>3.4.19.11</ecNumber>
    </recommendedName>
    <alternativeName>
        <fullName>Endopeptidase I</fullName>
    </alternativeName>
    <alternativeName>
        <fullName>Gamma-D-glutamyl-L-diamino acid endopeptidase I</fullName>
    </alternativeName>
    <alternativeName>
        <fullName>Gamma-D-glutamyl-meso-diaminopimelate peptidase I</fullName>
    </alternativeName>
</protein>
<dbReference type="EC" id="3.4.19.11"/>
<dbReference type="EMBL" id="X69507">
    <property type="protein sequence ID" value="CAA49259.1"/>
    <property type="molecule type" value="Genomic_DNA"/>
</dbReference>
<dbReference type="PIR" id="S33310">
    <property type="entry name" value="S33310"/>
</dbReference>
<dbReference type="SMR" id="Q03415"/>
<dbReference type="STRING" id="1421.A2J09_18500"/>
<dbReference type="MEROPS" id="M14.008"/>
<dbReference type="KEGG" id="ag:CAA49259"/>
<dbReference type="GO" id="GO:0005615">
    <property type="term" value="C:extracellular space"/>
    <property type="evidence" value="ECO:0007669"/>
    <property type="project" value="TreeGrafter"/>
</dbReference>
<dbReference type="GO" id="GO:0004181">
    <property type="term" value="F:metallocarboxypeptidase activity"/>
    <property type="evidence" value="ECO:0007669"/>
    <property type="project" value="InterPro"/>
</dbReference>
<dbReference type="GO" id="GO:0008270">
    <property type="term" value="F:zinc ion binding"/>
    <property type="evidence" value="ECO:0007669"/>
    <property type="project" value="InterPro"/>
</dbReference>
<dbReference type="GO" id="GO:0071555">
    <property type="term" value="P:cell wall organization"/>
    <property type="evidence" value="ECO:0007669"/>
    <property type="project" value="UniProtKB-KW"/>
</dbReference>
<dbReference type="GO" id="GO:0006508">
    <property type="term" value="P:proteolysis"/>
    <property type="evidence" value="ECO:0007669"/>
    <property type="project" value="UniProtKB-KW"/>
</dbReference>
<dbReference type="GO" id="GO:0030435">
    <property type="term" value="P:sporulation resulting in formation of a cellular spore"/>
    <property type="evidence" value="ECO:0007669"/>
    <property type="project" value="UniProtKB-KW"/>
</dbReference>
<dbReference type="CDD" id="cd00118">
    <property type="entry name" value="LysM"/>
    <property type="match status" value="2"/>
</dbReference>
<dbReference type="CDD" id="cd06229">
    <property type="entry name" value="M14_Endopeptidase_I"/>
    <property type="match status" value="1"/>
</dbReference>
<dbReference type="Gene3D" id="3.10.350.10">
    <property type="entry name" value="LysM domain"/>
    <property type="match status" value="2"/>
</dbReference>
<dbReference type="Gene3D" id="3.40.630.10">
    <property type="entry name" value="Zn peptidases"/>
    <property type="match status" value="1"/>
</dbReference>
<dbReference type="InterPro" id="IPR034274">
    <property type="entry name" value="ENP1_M14_CPD"/>
</dbReference>
<dbReference type="InterPro" id="IPR018392">
    <property type="entry name" value="LysM_dom"/>
</dbReference>
<dbReference type="InterPro" id="IPR036779">
    <property type="entry name" value="LysM_dom_sf"/>
</dbReference>
<dbReference type="InterPro" id="IPR000834">
    <property type="entry name" value="Peptidase_M14"/>
</dbReference>
<dbReference type="PANTHER" id="PTHR11705">
    <property type="entry name" value="PROTEASE FAMILY M14 CARBOXYPEPTIDASE A,B"/>
    <property type="match status" value="1"/>
</dbReference>
<dbReference type="PANTHER" id="PTHR11705:SF143">
    <property type="entry name" value="SLL0236 PROTEIN"/>
    <property type="match status" value="1"/>
</dbReference>
<dbReference type="Pfam" id="PF01476">
    <property type="entry name" value="LysM"/>
    <property type="match status" value="2"/>
</dbReference>
<dbReference type="Pfam" id="PF00246">
    <property type="entry name" value="Peptidase_M14"/>
    <property type="match status" value="1"/>
</dbReference>
<dbReference type="SMART" id="SM00257">
    <property type="entry name" value="LysM"/>
    <property type="match status" value="2"/>
</dbReference>
<dbReference type="SMART" id="SM00631">
    <property type="entry name" value="Zn_pept"/>
    <property type="match status" value="1"/>
</dbReference>
<dbReference type="SUPFAM" id="SSF54106">
    <property type="entry name" value="LysM domain"/>
    <property type="match status" value="2"/>
</dbReference>
<dbReference type="SUPFAM" id="SSF53187">
    <property type="entry name" value="Zn-dependent exopeptidases"/>
    <property type="match status" value="1"/>
</dbReference>
<dbReference type="PROSITE" id="PS00132">
    <property type="entry name" value="CARBOXYPEPT_ZN_1"/>
    <property type="match status" value="1"/>
</dbReference>
<dbReference type="PROSITE" id="PS51782">
    <property type="entry name" value="LYSM"/>
    <property type="match status" value="2"/>
</dbReference>
<dbReference type="PROSITE" id="PS52035">
    <property type="entry name" value="PEPTIDASE_M14"/>
    <property type="match status" value="1"/>
</dbReference>
<evidence type="ECO:0000250" key="1"/>
<evidence type="ECO:0000255" key="2">
    <source>
        <dbReference type="PROSITE-ProRule" id="PRU01118"/>
    </source>
</evidence>
<evidence type="ECO:0000255" key="3">
    <source>
        <dbReference type="PROSITE-ProRule" id="PRU01379"/>
    </source>
</evidence>
<evidence type="ECO:0000305" key="4"/>
<keyword id="KW-0961">Cell wall biogenesis/degradation</keyword>
<keyword id="KW-0903">Direct protein sequencing</keyword>
<keyword id="KW-0378">Hydrolase</keyword>
<keyword id="KW-0479">Metal-binding</keyword>
<keyword id="KW-0482">Metalloprotease</keyword>
<keyword id="KW-0645">Protease</keyword>
<keyword id="KW-0677">Repeat</keyword>
<keyword id="KW-0749">Sporulation</keyword>
<keyword id="KW-0862">Zinc</keyword>
<proteinExistence type="evidence at protein level"/>
<comment type="function">
    <text>An endopeptidase which hydrolyzes the gamma-D-Glu-(L)meso-diaminopimelic acid bond of L-Ala-gamma-D-Glu-(L)meso-diaminopimelic acid and L-Ala-gamma-D-Glu-(L)meso-diaminopimelic acid(L)-D-Ala peptides. It is active on spore cortex peptidoglycan.</text>
</comment>
<comment type="catalytic activity">
    <reaction>
        <text>Hydrolysis of gamma-D-glutamyl bonds to the L-terminus (position 7) of meso-diaminopimelic acid (meso-A2pm) in 7-(L-Ala-gamma-D-Glu)-meso-A2pm and 7-(L-Ala-gamma-D-Glu)-7-(D-Ala)-meso-A2pm. It is required that the D-terminal amino and carboxy groups of meso-A2pm are unsubstituted.</text>
        <dbReference type="EC" id="3.4.19.11"/>
    </reaction>
</comment>
<comment type="cofactor">
    <cofactor evidence="3">
        <name>Zn(2+)</name>
        <dbReference type="ChEBI" id="CHEBI:29105"/>
    </cofactor>
</comment>
<comment type="developmental stage">
    <text>Produced at stage IV of sporulation in forespore and spore integuments.</text>
</comment>
<comment type="domain">
    <text>LysM domains are thought to be involved in peptidoglycan binding.</text>
</comment>
<comment type="similarity">
    <text evidence="4">Belongs to the peptidase M14 family.</text>
</comment>
<organism>
    <name type="scientific">Lysinibacillus sphaericus</name>
    <name type="common">Bacillus sphaericus</name>
    <dbReference type="NCBI Taxonomy" id="1421"/>
    <lineage>
        <taxon>Bacteria</taxon>
        <taxon>Bacillati</taxon>
        <taxon>Bacillota</taxon>
        <taxon>Bacilli</taxon>
        <taxon>Bacillales</taxon>
        <taxon>Bacillaceae</taxon>
        <taxon>Lysinibacillus</taxon>
    </lineage>
</organism>
<sequence length="396" mass="44724">MDILIRPGDSLWYFSDLFKIPLQLLLDSNRNINPQLLQVGQRIQIPGYVTTSYTITQGDSLWQIAQNKNLPLNAILLVNPEIQPSRLHIGQTIQVPQRLTWRLVNGQQNYDYSMMMNDIKKLQTAYPFLQGTPIGNSVLAQPIPEILIGNGSKRIHYKASFHANEWITTPIIMTFLNDYLLALTNQTTIRGLSMGPLYNQTTLSLVPMVNPDGVNLVINGPPANEALKNKLIAWNHNSQNFSGWKANINGVDLNDQFPAKWELENARNPQTPGPRDYGGEAPLTQPEAIAMADLTRSRNFAWVLAFHTQGRVIYWGFENLEPPESQTMVEEFSRVSGYEPIQSANSYAGYKDWFIQDWRRPGFTVELGSGTNPLPISEFDTIYQEALGIFLAGLYL</sequence>